<sequence length="542" mass="59768">MRPSCASSSSSSASPSLRLSSVTVAVDKATSELLRTPDWTIIIAICDSLNSNRWQCKDAIKAVKRRLQHKSSRVQLLTLTLLEAMLKNCGDFVHSHIAEKHLLEDMVKLVRKKGDFEVRNKLLILLDTWNEAFSGVACKHPHYNWAYQELKRCGVKFPQRSKEAPLMLEPPPPVTQSSSSSSMNLMSIGSFRRLDETMATEIESLSLSSLESMRNVMDLVNDMVQAVNPSDKSALKDELIVDLVEQCRSNQKKLIQMLTTTADEDVLARGLELNDSLQVVLARHDAIASGVSLPLLLQAPEPRETSSSLKTCGAAALESADSESSSSSSSSESETDEVEDVKDDFIQLAKRHALLNALHSDEEEETLLLGNDNEKTAEAEAKTQCKDLALFDTTTTTTTKSEQDIIELLSLTLSTTALPSPQTQPQTQHPSFFADDNILMNSYVVPWAQSQEEPQVPKMTQFAPSGPQFQPWPLQQQQPYSYGYPQPQWSGGQVNSNDTTFWSQGGNENMVFERNLQVSNSFPARATGTSGAATAATVDRQP</sequence>
<protein>
    <recommendedName>
        <fullName evidence="8">TOM1-like protein 7</fullName>
    </recommendedName>
</protein>
<accession>F4KAU9</accession>
<accession>Q8GWW0</accession>
<accession>Q9LZX0</accession>
<reference key="1">
    <citation type="journal article" date="2000" name="Nature">
        <title>Sequence and analysis of chromosome 5 of the plant Arabidopsis thaliana.</title>
        <authorList>
            <person name="Tabata S."/>
            <person name="Kaneko T."/>
            <person name="Nakamura Y."/>
            <person name="Kotani H."/>
            <person name="Kato T."/>
            <person name="Asamizu E."/>
            <person name="Miyajima N."/>
            <person name="Sasamoto S."/>
            <person name="Kimura T."/>
            <person name="Hosouchi T."/>
            <person name="Kawashima K."/>
            <person name="Kohara M."/>
            <person name="Matsumoto M."/>
            <person name="Matsuno A."/>
            <person name="Muraki A."/>
            <person name="Nakayama S."/>
            <person name="Nakazaki N."/>
            <person name="Naruo K."/>
            <person name="Okumura S."/>
            <person name="Shinpo S."/>
            <person name="Takeuchi C."/>
            <person name="Wada T."/>
            <person name="Watanabe A."/>
            <person name="Yamada M."/>
            <person name="Yasuda M."/>
            <person name="Sato S."/>
            <person name="de la Bastide M."/>
            <person name="Huang E."/>
            <person name="Spiegel L."/>
            <person name="Gnoj L."/>
            <person name="O'Shaughnessy A."/>
            <person name="Preston R."/>
            <person name="Habermann K."/>
            <person name="Murray J."/>
            <person name="Johnson D."/>
            <person name="Rohlfing T."/>
            <person name="Nelson J."/>
            <person name="Stoneking T."/>
            <person name="Pepin K."/>
            <person name="Spieth J."/>
            <person name="Sekhon M."/>
            <person name="Armstrong J."/>
            <person name="Becker M."/>
            <person name="Belter E."/>
            <person name="Cordum H."/>
            <person name="Cordes M."/>
            <person name="Courtney L."/>
            <person name="Courtney W."/>
            <person name="Dante M."/>
            <person name="Du H."/>
            <person name="Edwards J."/>
            <person name="Fryman J."/>
            <person name="Haakensen B."/>
            <person name="Lamar E."/>
            <person name="Latreille P."/>
            <person name="Leonard S."/>
            <person name="Meyer R."/>
            <person name="Mulvaney E."/>
            <person name="Ozersky P."/>
            <person name="Riley A."/>
            <person name="Strowmatt C."/>
            <person name="Wagner-McPherson C."/>
            <person name="Wollam A."/>
            <person name="Yoakum M."/>
            <person name="Bell M."/>
            <person name="Dedhia N."/>
            <person name="Parnell L."/>
            <person name="Shah R."/>
            <person name="Rodriguez M."/>
            <person name="Hoon See L."/>
            <person name="Vil D."/>
            <person name="Baker J."/>
            <person name="Kirchoff K."/>
            <person name="Toth K."/>
            <person name="King L."/>
            <person name="Bahret A."/>
            <person name="Miller B."/>
            <person name="Marra M.A."/>
            <person name="Martienssen R."/>
            <person name="McCombie W.R."/>
            <person name="Wilson R.K."/>
            <person name="Murphy G."/>
            <person name="Bancroft I."/>
            <person name="Volckaert G."/>
            <person name="Wambutt R."/>
            <person name="Duesterhoeft A."/>
            <person name="Stiekema W."/>
            <person name="Pohl T."/>
            <person name="Entian K.-D."/>
            <person name="Terryn N."/>
            <person name="Hartley N."/>
            <person name="Bent E."/>
            <person name="Johnson S."/>
            <person name="Langham S.-A."/>
            <person name="McCullagh B."/>
            <person name="Robben J."/>
            <person name="Grymonprez B."/>
            <person name="Zimmermann W."/>
            <person name="Ramsperger U."/>
            <person name="Wedler H."/>
            <person name="Balke K."/>
            <person name="Wedler E."/>
            <person name="Peters S."/>
            <person name="van Staveren M."/>
            <person name="Dirkse W."/>
            <person name="Mooijman P."/>
            <person name="Klein Lankhorst R."/>
            <person name="Weitzenegger T."/>
            <person name="Bothe G."/>
            <person name="Rose M."/>
            <person name="Hauf J."/>
            <person name="Berneiser S."/>
            <person name="Hempel S."/>
            <person name="Feldpausch M."/>
            <person name="Lamberth S."/>
            <person name="Villarroel R."/>
            <person name="Gielen J."/>
            <person name="Ardiles W."/>
            <person name="Bents O."/>
            <person name="Lemcke K."/>
            <person name="Kolesov G."/>
            <person name="Mayer K.F.X."/>
            <person name="Rudd S."/>
            <person name="Schoof H."/>
            <person name="Schueller C."/>
            <person name="Zaccaria P."/>
            <person name="Mewes H.-W."/>
            <person name="Bevan M."/>
            <person name="Fransz P.F."/>
        </authorList>
    </citation>
    <scope>NUCLEOTIDE SEQUENCE [LARGE SCALE GENOMIC DNA]</scope>
    <source>
        <strain>cv. Columbia</strain>
    </source>
</reference>
<reference key="2">
    <citation type="journal article" date="2017" name="Plant J.">
        <title>Araport11: a complete reannotation of the Arabidopsis thaliana reference genome.</title>
        <authorList>
            <person name="Cheng C.Y."/>
            <person name="Krishnakumar V."/>
            <person name="Chan A.P."/>
            <person name="Thibaud-Nissen F."/>
            <person name="Schobel S."/>
            <person name="Town C.D."/>
        </authorList>
    </citation>
    <scope>GENOME REANNOTATION</scope>
    <source>
        <strain>cv. Columbia</strain>
    </source>
</reference>
<reference key="3">
    <citation type="journal article" date="2002" name="Science">
        <title>Functional annotation of a full-length Arabidopsis cDNA collection.</title>
        <authorList>
            <person name="Seki M."/>
            <person name="Narusaka M."/>
            <person name="Kamiya A."/>
            <person name="Ishida J."/>
            <person name="Satou M."/>
            <person name="Sakurai T."/>
            <person name="Nakajima M."/>
            <person name="Enju A."/>
            <person name="Akiyama K."/>
            <person name="Oono Y."/>
            <person name="Muramatsu M."/>
            <person name="Hayashizaki Y."/>
            <person name="Kawai J."/>
            <person name="Carninci P."/>
            <person name="Itoh M."/>
            <person name="Ishii Y."/>
            <person name="Arakawa T."/>
            <person name="Shibata K."/>
            <person name="Shinagawa A."/>
            <person name="Shinozaki K."/>
        </authorList>
    </citation>
    <scope>NUCLEOTIDE SEQUENCE [LARGE SCALE MRNA]</scope>
    <source>
        <strain>cv. Columbia</strain>
    </source>
</reference>
<reference key="4">
    <citation type="journal article" date="2006" name="Trends Plant Sci.">
        <title>Exploring the ESCRTing machinery in eukaryotes.</title>
        <authorList>
            <person name="Winter V."/>
            <person name="Hauser M.-T."/>
        </authorList>
    </citation>
    <scope>GENE FAMILY</scope>
    <scope>REVIEW</scope>
</reference>
<reference key="5">
    <citation type="journal article" date="2011" name="Front. Plant Sci.">
        <title>Protein-protein interaction network and subcellular localization of the Arabidopsis thaliana ESCRT machinery.</title>
        <authorList>
            <person name="Richardson L.G."/>
            <person name="Howard A.S."/>
            <person name="Khuu N."/>
            <person name="Gidda S.K."/>
            <person name="McCartney A."/>
            <person name="Morphy B.J."/>
            <person name="Mullen R.T."/>
        </authorList>
    </citation>
    <scope>GENE FAMILY</scope>
    <scope>NOMENCLATURE</scope>
</reference>
<reference key="6">
    <citation type="journal article" date="2013" name="Curr. Biol.">
        <title>Arabidopsis TOL proteins act as gatekeepers for vacuolar sorting of PIN2 plasma membrane protein.</title>
        <authorList>
            <person name="Korbei B."/>
            <person name="Moulinier-Anzola J."/>
            <person name="De-Araujo L."/>
            <person name="Lucyshyn D."/>
            <person name="Retzer K."/>
            <person name="Khan M.A."/>
            <person name="Luschnig C."/>
        </authorList>
    </citation>
    <scope>GENE FAMILY</scope>
    <scope>NOMENCLATURE</scope>
</reference>
<reference key="7">
    <citation type="journal article" date="2014" name="Plant Signal. Behav.">
        <title>Expression of Arabidopsis TOL genes.</title>
        <authorList>
            <person name="Moulinier-Anzola J."/>
            <person name="De-Araujo L."/>
            <person name="Korbei B."/>
        </authorList>
    </citation>
    <scope>TISSUE SPECIFICITY</scope>
</reference>
<keyword id="KW-0472">Membrane</keyword>
<keyword id="KW-0597">Phosphoprotein</keyword>
<keyword id="KW-0653">Protein transport</keyword>
<keyword id="KW-1185">Reference proteome</keyword>
<keyword id="KW-0813">Transport</keyword>
<gene>
    <name evidence="7" type="primary">TOL7</name>
    <name evidence="6" type="synonym">TOM1B</name>
    <name evidence="10" type="ordered locus">At5g01760</name>
    <name evidence="11" type="ORF">T20L15.30</name>
</gene>
<comment type="function">
    <text evidence="9">Might contribute to the loading of the ESCRT machinery.</text>
</comment>
<comment type="subcellular location">
    <subcellularLocation>
        <location evidence="8">Membrane</location>
        <topology evidence="8">Peripheral membrane protein</topology>
    </subcellularLocation>
</comment>
<comment type="tissue specificity">
    <text evidence="5">Preferentially expressed in flowers.</text>
</comment>
<comment type="similarity">
    <text evidence="8">Belongs to the TOM1 family.</text>
</comment>
<comment type="sequence caution" evidence="8">
    <conflict type="frameshift">
        <sequence resource="EMBL-CDS" id="BAC43199"/>
    </conflict>
</comment>
<comment type="sequence caution" evidence="8">
    <conflict type="miscellaneous discrepancy">
        <sequence resource="EMBL-CDS" id="BAC43199"/>
    </conflict>
    <text>Introns retention.</text>
</comment>
<comment type="sequence caution" evidence="8">
    <conflict type="erroneous gene model prediction">
        <sequence resource="EMBL-CDS" id="CAB82746"/>
    </conflict>
</comment>
<feature type="chain" id="PRO_0000440682" description="TOM1-like protein 7">
    <location>
        <begin position="1"/>
        <end position="542"/>
    </location>
</feature>
<feature type="domain" description="VHS" evidence="2">
    <location>
        <begin position="29"/>
        <end position="158"/>
    </location>
</feature>
<feature type="domain" description="GAT" evidence="3">
    <location>
        <begin position="201"/>
        <end position="289"/>
    </location>
</feature>
<feature type="region of interest" description="Disordered" evidence="4">
    <location>
        <begin position="303"/>
        <end position="340"/>
    </location>
</feature>
<feature type="region of interest" description="Disordered" evidence="4">
    <location>
        <begin position="522"/>
        <end position="542"/>
    </location>
</feature>
<feature type="compositionally biased region" description="Low complexity" evidence="4">
    <location>
        <begin position="314"/>
        <end position="332"/>
    </location>
</feature>
<feature type="compositionally biased region" description="Low complexity" evidence="4">
    <location>
        <begin position="524"/>
        <end position="542"/>
    </location>
</feature>
<feature type="modified residue" description="Phosphoserine" evidence="1">
    <location>
        <position position="161"/>
    </location>
</feature>
<feature type="modified residue" description="Phosphoserine" evidence="1">
    <location>
        <position position="521"/>
    </location>
</feature>
<evidence type="ECO:0000250" key="1">
    <source>
        <dbReference type="UniProtKB" id="O80910"/>
    </source>
</evidence>
<evidence type="ECO:0000255" key="2">
    <source>
        <dbReference type="PROSITE-ProRule" id="PRU00218"/>
    </source>
</evidence>
<evidence type="ECO:0000255" key="3">
    <source>
        <dbReference type="PROSITE-ProRule" id="PRU00373"/>
    </source>
</evidence>
<evidence type="ECO:0000256" key="4">
    <source>
        <dbReference type="SAM" id="MobiDB-lite"/>
    </source>
</evidence>
<evidence type="ECO:0000269" key="5">
    <source>
    </source>
</evidence>
<evidence type="ECO:0000303" key="6">
    <source>
    </source>
</evidence>
<evidence type="ECO:0000303" key="7">
    <source>
    </source>
</evidence>
<evidence type="ECO:0000305" key="8"/>
<evidence type="ECO:0000305" key="9">
    <source>
    </source>
</evidence>
<evidence type="ECO:0000312" key="10">
    <source>
        <dbReference type="Araport" id="AT5G01760"/>
    </source>
</evidence>
<evidence type="ECO:0000312" key="11">
    <source>
        <dbReference type="EMBL" id="CAB82746.1"/>
    </source>
</evidence>
<dbReference type="EMBL" id="AL162351">
    <property type="protein sequence ID" value="CAB82746.1"/>
    <property type="status" value="ALT_SEQ"/>
    <property type="molecule type" value="Genomic_DNA"/>
</dbReference>
<dbReference type="EMBL" id="CP002688">
    <property type="protein sequence ID" value="AED90388.1"/>
    <property type="molecule type" value="Genomic_DNA"/>
</dbReference>
<dbReference type="EMBL" id="AK118600">
    <property type="protein sequence ID" value="BAC43199.1"/>
    <property type="status" value="ALT_SEQ"/>
    <property type="molecule type" value="mRNA"/>
</dbReference>
<dbReference type="PIR" id="T48197">
    <property type="entry name" value="T48197"/>
</dbReference>
<dbReference type="RefSeq" id="NP_195796.2">
    <property type="nucleotide sequence ID" value="NM_120254.3"/>
</dbReference>
<dbReference type="SMR" id="F4KAU9"/>
<dbReference type="FunCoup" id="F4KAU9">
    <property type="interactions" value="165"/>
</dbReference>
<dbReference type="STRING" id="3702.F4KAU9"/>
<dbReference type="PaxDb" id="3702-AT5G01760.1"/>
<dbReference type="ProteomicsDB" id="232461"/>
<dbReference type="EnsemblPlants" id="AT5G01760.1">
    <property type="protein sequence ID" value="AT5G01760.1"/>
    <property type="gene ID" value="AT5G01760"/>
</dbReference>
<dbReference type="GeneID" id="831682"/>
<dbReference type="Gramene" id="AT5G01760.1">
    <property type="protein sequence ID" value="AT5G01760.1"/>
    <property type="gene ID" value="AT5G01760"/>
</dbReference>
<dbReference type="KEGG" id="ath:AT5G01760"/>
<dbReference type="Araport" id="AT5G01760"/>
<dbReference type="TAIR" id="AT5G01760"/>
<dbReference type="eggNOG" id="KOG1087">
    <property type="taxonomic scope" value="Eukaryota"/>
</dbReference>
<dbReference type="HOGENOM" id="CLU_026748_2_1_1"/>
<dbReference type="InParanoid" id="F4KAU9"/>
<dbReference type="OMA" id="WQCKDAI"/>
<dbReference type="PRO" id="PR:F4KAU9"/>
<dbReference type="Proteomes" id="UP000006548">
    <property type="component" value="Chromosome 5"/>
</dbReference>
<dbReference type="ExpressionAtlas" id="F4KAU9">
    <property type="expression patterns" value="baseline and differential"/>
</dbReference>
<dbReference type="GO" id="GO:0005737">
    <property type="term" value="C:cytoplasm"/>
    <property type="evidence" value="ECO:0007669"/>
    <property type="project" value="UniProtKB-ARBA"/>
</dbReference>
<dbReference type="GO" id="GO:0016020">
    <property type="term" value="C:membrane"/>
    <property type="evidence" value="ECO:0007669"/>
    <property type="project" value="UniProtKB-SubCell"/>
</dbReference>
<dbReference type="GO" id="GO:0035091">
    <property type="term" value="F:phosphatidylinositol binding"/>
    <property type="evidence" value="ECO:0007669"/>
    <property type="project" value="InterPro"/>
</dbReference>
<dbReference type="GO" id="GO:0043130">
    <property type="term" value="F:ubiquitin binding"/>
    <property type="evidence" value="ECO:0007669"/>
    <property type="project" value="InterPro"/>
</dbReference>
<dbReference type="GO" id="GO:0043328">
    <property type="term" value="P:protein transport to vacuole involved in ubiquitin-dependent protein catabolic process via the multivesicular body sorting pathway"/>
    <property type="evidence" value="ECO:0007669"/>
    <property type="project" value="InterPro"/>
</dbReference>
<dbReference type="CDD" id="cd14231">
    <property type="entry name" value="GAT_GGA-like_plant"/>
    <property type="match status" value="1"/>
</dbReference>
<dbReference type="CDD" id="cd03561">
    <property type="entry name" value="VHS"/>
    <property type="match status" value="1"/>
</dbReference>
<dbReference type="Gene3D" id="1.20.58.160">
    <property type="match status" value="1"/>
</dbReference>
<dbReference type="Gene3D" id="1.25.40.90">
    <property type="match status" value="1"/>
</dbReference>
<dbReference type="InterPro" id="IPR008942">
    <property type="entry name" value="ENTH_VHS"/>
</dbReference>
<dbReference type="InterPro" id="IPR004152">
    <property type="entry name" value="GAT_dom"/>
</dbReference>
<dbReference type="InterPro" id="IPR038425">
    <property type="entry name" value="GAT_sf"/>
</dbReference>
<dbReference type="InterPro" id="IPR044836">
    <property type="entry name" value="TOL_plant"/>
</dbReference>
<dbReference type="InterPro" id="IPR002014">
    <property type="entry name" value="VHS_dom"/>
</dbReference>
<dbReference type="PANTHER" id="PTHR45898">
    <property type="entry name" value="TOM1-LIKE PROTEIN"/>
    <property type="match status" value="1"/>
</dbReference>
<dbReference type="PANTHER" id="PTHR45898:SF13">
    <property type="entry name" value="TOM1-LIKE PROTEIN 7"/>
    <property type="match status" value="1"/>
</dbReference>
<dbReference type="Pfam" id="PF03127">
    <property type="entry name" value="GAT"/>
    <property type="match status" value="1"/>
</dbReference>
<dbReference type="Pfam" id="PF00790">
    <property type="entry name" value="VHS"/>
    <property type="match status" value="1"/>
</dbReference>
<dbReference type="SMART" id="SM00288">
    <property type="entry name" value="VHS"/>
    <property type="match status" value="1"/>
</dbReference>
<dbReference type="SUPFAM" id="SSF48464">
    <property type="entry name" value="ENTH/VHS domain"/>
    <property type="match status" value="1"/>
</dbReference>
<dbReference type="SUPFAM" id="SSF89009">
    <property type="entry name" value="GAT-like domain"/>
    <property type="match status" value="1"/>
</dbReference>
<dbReference type="PROSITE" id="PS50909">
    <property type="entry name" value="GAT"/>
    <property type="match status" value="1"/>
</dbReference>
<dbReference type="PROSITE" id="PS50179">
    <property type="entry name" value="VHS"/>
    <property type="match status" value="1"/>
</dbReference>
<proteinExistence type="evidence at transcript level"/>
<name>TOL7_ARATH</name>
<organism>
    <name type="scientific">Arabidopsis thaliana</name>
    <name type="common">Mouse-ear cress</name>
    <dbReference type="NCBI Taxonomy" id="3702"/>
    <lineage>
        <taxon>Eukaryota</taxon>
        <taxon>Viridiplantae</taxon>
        <taxon>Streptophyta</taxon>
        <taxon>Embryophyta</taxon>
        <taxon>Tracheophyta</taxon>
        <taxon>Spermatophyta</taxon>
        <taxon>Magnoliopsida</taxon>
        <taxon>eudicotyledons</taxon>
        <taxon>Gunneridae</taxon>
        <taxon>Pentapetalae</taxon>
        <taxon>rosids</taxon>
        <taxon>malvids</taxon>
        <taxon>Brassicales</taxon>
        <taxon>Brassicaceae</taxon>
        <taxon>Camelineae</taxon>
        <taxon>Arabidopsis</taxon>
    </lineage>
</organism>